<proteinExistence type="inferred from homology"/>
<comment type="function">
    <text evidence="1">Condensation of UDP-2,3-diacylglucosamine and 2,3-diacylglucosamine-1-phosphate to form lipid A disaccharide, a precursor of lipid A, a phosphorylated glycolipid that anchors the lipopolysaccharide to the outer membrane of the cell.</text>
</comment>
<comment type="catalytic activity">
    <reaction evidence="1">
        <text>a lipid X + a UDP-2-N,3-O-bis[(3R)-3-hydroxyacyl]-alpha-D-glucosamine = a lipid A disaccharide + UDP + H(+)</text>
        <dbReference type="Rhea" id="RHEA:67828"/>
        <dbReference type="ChEBI" id="CHEBI:15378"/>
        <dbReference type="ChEBI" id="CHEBI:58223"/>
        <dbReference type="ChEBI" id="CHEBI:137748"/>
        <dbReference type="ChEBI" id="CHEBI:176338"/>
        <dbReference type="ChEBI" id="CHEBI:176343"/>
        <dbReference type="EC" id="2.4.1.182"/>
    </reaction>
</comment>
<comment type="pathway">
    <text evidence="1">Bacterial outer membrane biogenesis; LPS lipid A biosynthesis.</text>
</comment>
<comment type="similarity">
    <text evidence="1">Belongs to the LpxB family.</text>
</comment>
<keyword id="KW-0328">Glycosyltransferase</keyword>
<keyword id="KW-0441">Lipid A biosynthesis</keyword>
<keyword id="KW-0444">Lipid biosynthesis</keyword>
<keyword id="KW-0443">Lipid metabolism</keyword>
<keyword id="KW-0808">Transferase</keyword>
<reference key="1">
    <citation type="submission" date="2006-08" db="EMBL/GenBank/DDBJ databases">
        <title>Complete sequence of chromosome 1 of Burkholderia cepacia AMMD.</title>
        <authorList>
            <person name="Copeland A."/>
            <person name="Lucas S."/>
            <person name="Lapidus A."/>
            <person name="Barry K."/>
            <person name="Detter J.C."/>
            <person name="Glavina del Rio T."/>
            <person name="Hammon N."/>
            <person name="Israni S."/>
            <person name="Pitluck S."/>
            <person name="Bruce D."/>
            <person name="Chain P."/>
            <person name="Malfatti S."/>
            <person name="Shin M."/>
            <person name="Vergez L."/>
            <person name="Schmutz J."/>
            <person name="Larimer F."/>
            <person name="Land M."/>
            <person name="Hauser L."/>
            <person name="Kyrpides N."/>
            <person name="Kim E."/>
            <person name="Parke J."/>
            <person name="Coenye T."/>
            <person name="Konstantinidis K."/>
            <person name="Ramette A."/>
            <person name="Tiedje J."/>
            <person name="Richardson P."/>
        </authorList>
    </citation>
    <scope>NUCLEOTIDE SEQUENCE [LARGE SCALE GENOMIC DNA]</scope>
    <source>
        <strain>ATCC BAA-244 / DSM 16087 / CCUG 44356 / LMG 19182 / AMMD</strain>
    </source>
</reference>
<gene>
    <name evidence="1" type="primary">lpxB</name>
    <name type="ordered locus">Bamb_2039</name>
</gene>
<sequence length="389" mass="42344">MSLPTNQLRLAMVAGEPSGDLLAASLLGGLQERLPASTRYYGIGGQRMLAHGFDSHWQMDKLTVRGYVEALGQIPEILRIRGELKRQLLAERPDAFIGVDAPDFNFSVEQAARDAGIPSIHFVCPSIWAWRGGRIKKIAKSVDHMLCLFPFEPAILDKAGVASTYVGHPLADEIPLEPDTHGARIALGLPADGPVIAVLPGSRRSEIGLIGPTFFAAMALMQQREPGVRFVMPAATPALRELLQPLVDAHPQLALTITDGRSQVAMTAADAILVKSGTVTLEAALLKKPMVISYKVPWLTGQIMRRQGYLPYVGLPNILAGRFVVPELLQHFATPEALADATLTQLRDDANRRTLTEVFTEMHLSLRQNTAAKAAEAVVRVLEQRRGRA</sequence>
<accession>Q0BE28</accession>
<evidence type="ECO:0000255" key="1">
    <source>
        <dbReference type="HAMAP-Rule" id="MF_00392"/>
    </source>
</evidence>
<protein>
    <recommendedName>
        <fullName evidence="1">Lipid-A-disaccharide synthase</fullName>
        <ecNumber evidence="1">2.4.1.182</ecNumber>
    </recommendedName>
</protein>
<feature type="chain" id="PRO_1000049386" description="Lipid-A-disaccharide synthase">
    <location>
        <begin position="1"/>
        <end position="389"/>
    </location>
</feature>
<organism>
    <name type="scientific">Burkholderia ambifaria (strain ATCC BAA-244 / DSM 16087 / CCUG 44356 / LMG 19182 / AMMD)</name>
    <name type="common">Burkholderia cepacia (strain AMMD)</name>
    <dbReference type="NCBI Taxonomy" id="339670"/>
    <lineage>
        <taxon>Bacteria</taxon>
        <taxon>Pseudomonadati</taxon>
        <taxon>Pseudomonadota</taxon>
        <taxon>Betaproteobacteria</taxon>
        <taxon>Burkholderiales</taxon>
        <taxon>Burkholderiaceae</taxon>
        <taxon>Burkholderia</taxon>
        <taxon>Burkholderia cepacia complex</taxon>
    </lineage>
</organism>
<dbReference type="EC" id="2.4.1.182" evidence="1"/>
<dbReference type="EMBL" id="CP000440">
    <property type="protein sequence ID" value="ABI87595.1"/>
    <property type="molecule type" value="Genomic_DNA"/>
</dbReference>
<dbReference type="RefSeq" id="WP_011657277.1">
    <property type="nucleotide sequence ID" value="NZ_CP009798.1"/>
</dbReference>
<dbReference type="SMR" id="Q0BE28"/>
<dbReference type="GeneID" id="93085762"/>
<dbReference type="KEGG" id="bam:Bamb_2039"/>
<dbReference type="PATRIC" id="fig|339670.21.peg.2905"/>
<dbReference type="eggNOG" id="COG0763">
    <property type="taxonomic scope" value="Bacteria"/>
</dbReference>
<dbReference type="UniPathway" id="UPA00973"/>
<dbReference type="Proteomes" id="UP000000662">
    <property type="component" value="Chromosome 1"/>
</dbReference>
<dbReference type="GO" id="GO:0016020">
    <property type="term" value="C:membrane"/>
    <property type="evidence" value="ECO:0007669"/>
    <property type="project" value="GOC"/>
</dbReference>
<dbReference type="GO" id="GO:0008915">
    <property type="term" value="F:lipid-A-disaccharide synthase activity"/>
    <property type="evidence" value="ECO:0007669"/>
    <property type="project" value="UniProtKB-UniRule"/>
</dbReference>
<dbReference type="GO" id="GO:0005543">
    <property type="term" value="F:phospholipid binding"/>
    <property type="evidence" value="ECO:0007669"/>
    <property type="project" value="TreeGrafter"/>
</dbReference>
<dbReference type="GO" id="GO:0009245">
    <property type="term" value="P:lipid A biosynthetic process"/>
    <property type="evidence" value="ECO:0007669"/>
    <property type="project" value="UniProtKB-UniRule"/>
</dbReference>
<dbReference type="HAMAP" id="MF_00392">
    <property type="entry name" value="LpxB"/>
    <property type="match status" value="1"/>
</dbReference>
<dbReference type="InterPro" id="IPR003835">
    <property type="entry name" value="Glyco_trans_19"/>
</dbReference>
<dbReference type="NCBIfam" id="TIGR00215">
    <property type="entry name" value="lpxB"/>
    <property type="match status" value="1"/>
</dbReference>
<dbReference type="PANTHER" id="PTHR30372">
    <property type="entry name" value="LIPID-A-DISACCHARIDE SYNTHASE"/>
    <property type="match status" value="1"/>
</dbReference>
<dbReference type="PANTHER" id="PTHR30372:SF4">
    <property type="entry name" value="LIPID-A-DISACCHARIDE SYNTHASE, MITOCHONDRIAL-RELATED"/>
    <property type="match status" value="1"/>
</dbReference>
<dbReference type="Pfam" id="PF02684">
    <property type="entry name" value="LpxB"/>
    <property type="match status" value="1"/>
</dbReference>
<dbReference type="SUPFAM" id="SSF53756">
    <property type="entry name" value="UDP-Glycosyltransferase/glycogen phosphorylase"/>
    <property type="match status" value="1"/>
</dbReference>
<name>LPXB_BURCM</name>